<gene>
    <name type="primary">60</name>
</gene>
<sequence length="160" mass="18630">MKFVKIDSSSVDMKKYKLQNNVRRSIKSSSMNYANVAIMTDADHDGLGSIYPSLLGFFSNWPELFEQGRIRFVKTPVIIAQVGKKQEWFYTVAEYESAKDALPKHSIRYIKGLGSLEKSEYREMIQNPVYDVVKLPENWKELFEMLMGDNADLRKEWMSQ</sequence>
<comment type="function">
    <text evidence="1">Small subunit of the DNA topoisomerase that untwists superhelical DNA. Controls topological states of double-stranded DNA by transient breakage and subsequent rejoining of DNA strands.</text>
</comment>
<comment type="catalytic activity">
    <reaction evidence="1">
        <text>ATP-dependent breakage, passage and rejoining of double-stranded DNA.</text>
        <dbReference type="EC" id="5.6.2.2"/>
    </reaction>
</comment>
<comment type="cofactor">
    <cofactor evidence="1">
        <name>Mg(2+)</name>
        <dbReference type="ChEBI" id="CHEBI:18420"/>
    </cofactor>
</comment>
<comment type="subunit">
    <text evidence="1 6">Part of the DNA topoisomerase complex made of gp39, gp52 and gp60.</text>
</comment>
<comment type="miscellaneous">
    <text evidence="2 3 4 5">There is a 50-nucleotide untranslated region in the coding sequence of gene 60. The ribosome apparently skips this region while reading the mRNA.</text>
</comment>
<organism>
    <name type="scientific">Enterobacteria phage T4</name>
    <name type="common">Bacteriophage T4</name>
    <dbReference type="NCBI Taxonomy" id="10665"/>
    <lineage>
        <taxon>Viruses</taxon>
        <taxon>Duplodnaviria</taxon>
        <taxon>Heunggongvirae</taxon>
        <taxon>Uroviricota</taxon>
        <taxon>Caudoviricetes</taxon>
        <taxon>Straboviridae</taxon>
        <taxon>Tevenvirinae</taxon>
        <taxon>Tequatrovirus</taxon>
    </lineage>
</organism>
<reference key="1">
    <citation type="journal article" date="1988" name="Science">
        <title>A persistent untranslated sequence within bacteriophage T4 DNA topoisomerase gene 60.</title>
        <authorList>
            <person name="Huang W.M."/>
            <person name="Ao S.-Z."/>
            <person name="Casjens S."/>
            <person name="Orlandi R."/>
            <person name="Zeikus R."/>
            <person name="Weiss R."/>
            <person name="Winge D."/>
            <person name="Fang M."/>
        </authorList>
    </citation>
    <scope>NUCLEOTIDE SEQUENCE [GENOMIC DNA]</scope>
    <scope>PROTEIN SEQUENCE OF 1-58 AND 82-99</scope>
</reference>
<reference key="2">
    <citation type="journal article" date="2003" name="Microbiol. Mol. Biol. Rev.">
        <title>Bacteriophage T4 genome.</title>
        <authorList>
            <person name="Miller E.S."/>
            <person name="Kutter E."/>
            <person name="Mosig G."/>
            <person name="Arisaka F."/>
            <person name="Kunisawa T."/>
            <person name="Ruger W."/>
        </authorList>
    </citation>
    <scope>NUCLEOTIDE SEQUENCE [LARGE SCALE GENOMIC DNA]</scope>
</reference>
<reference key="3">
    <citation type="journal article" date="1990" name="Genetics">
        <title>The rIIA gene of bacteriophage T4. I. Its DNA sequence and discovery of a new open reading frame between genes 60 and rIIA.</title>
        <authorList>
            <person name="Daegelen P."/>
            <person name="Brody E."/>
        </authorList>
    </citation>
    <scope>NUCLEOTIDE SEQUENCE [GENOMIC DNA] OF 70-160</scope>
</reference>
<reference key="4">
    <citation type="journal article" date="1979" name="Proc. Natl. Acad. Sci. U.S.A.">
        <title>T4 DNA-delay proteins, required for specific DNA replication, form a complex that has ATP-dependent DNA topoisomerase activity.</title>
        <authorList>
            <person name="Stetler G.L."/>
            <person name="King G.J."/>
            <person name="Huang W.M."/>
        </authorList>
    </citation>
    <scope>IDENTIFICATION IN THE DNA TOPOISOMERASE COMPLEX</scope>
    <scope>CATALYTIC ACTIVITY</scope>
    <scope>FUNCTION</scope>
    <scope>COFACTOR</scope>
</reference>
<reference key="5">
    <citation type="journal article" date="1983" name="J. Biol. Chem.">
        <title>Identification of bacteriophage T4 gene 60 product and a role for this protein in DNA topoisomerase.</title>
        <authorList>
            <person name="Seasholtz A.F."/>
            <person name="Greenberg G.R."/>
        </authorList>
    </citation>
    <scope>IDENTIFICATION IN THE DNA TOPOISOMERASE COMPLEX</scope>
</reference>
<reference key="6">
    <citation type="journal article" date="2000" name="EMBO J.">
        <title>One protein from two open reading frames: mechanism of a 50 nt translational bypass.</title>
        <authorList>
            <person name="Herr A.J."/>
            <person name="Gesteland R.F."/>
            <person name="Atkins J.F."/>
        </authorList>
    </citation>
    <scope>TRANSLATIONAL BYPASSING</scope>
</reference>
<reference key="7">
    <citation type="journal article" date="2013" name="RNA">
        <title>Secondary structure of bacteriophage T4 gene 60 mRNA: implications for translational bypassing.</title>
        <authorList>
            <person name="Todd G.C."/>
            <person name="Walter N.G."/>
        </authorList>
    </citation>
    <scope>TRANSLATIONAL BYPASSING</scope>
</reference>
<reference key="8">
    <citation type="journal article" date="2014" name="Nat. Commun.">
        <title>High-efficiency translational bypassing of non-coding nucleotides specified by mRNA structure and nascent peptide.</title>
        <authorList>
            <person name="Samatova E."/>
            <person name="Konevega A.L."/>
            <person name="Wills N.M."/>
            <person name="Atkins J.F."/>
            <person name="Rodnina M.V."/>
        </authorList>
    </citation>
    <scope>TRANSLATIONAL BYPASSING</scope>
</reference>
<reference evidence="7" key="9">
    <citation type="journal article" date="2017" name="Sci. Adv.">
        <title>Ribosome rearrangements at the onset of translational bypassing.</title>
        <authorList>
            <person name="Agirrezabala X."/>
            <person name="Samatova E."/>
            <person name="Klimova M."/>
            <person name="Zamora M."/>
            <person name="Gil-Carton D."/>
            <person name="Rodnina M.V."/>
            <person name="Valle M."/>
        </authorList>
    </citation>
    <scope>STRUCTURE BY ELECTRON MICROSCOPY (3.60 ANGSTROMS) OF 1-46</scope>
    <scope>TRANSLATIONAL BYPASSING</scope>
</reference>
<proteinExistence type="evidence at protein level"/>
<protein>
    <recommendedName>
        <fullName>DNA topoisomerase small subunit</fullName>
        <ecNumber evidence="1">5.6.2.2</ecNumber>
    </recommendedName>
    <alternativeName>
        <fullName>DNA topoisomerase 18-kDa subunit</fullName>
    </alternativeName>
    <alternativeName>
        <fullName>Protein Gp60</fullName>
    </alternativeName>
</protein>
<keyword id="KW-0002">3D-structure</keyword>
<keyword id="KW-0067">ATP-binding</keyword>
<keyword id="KW-0903">Direct protein sequencing</keyword>
<keyword id="KW-0238">DNA-binding</keyword>
<keyword id="KW-0413">Isomerase</keyword>
<keyword id="KW-0547">Nucleotide-binding</keyword>
<keyword id="KW-1185">Reference proteome</keyword>
<keyword id="KW-0799">Topoisomerase</keyword>
<dbReference type="EC" id="5.6.2.2" evidence="1"/>
<dbReference type="EMBL" id="M19728">
    <property type="protein sequence ID" value="AAA32490.1"/>
    <property type="molecule type" value="Genomic_DNA"/>
</dbReference>
<dbReference type="EMBL" id="AF158101">
    <property type="protein sequence ID" value="AAD42506.1"/>
    <property type="molecule type" value="Genomic_DNA"/>
</dbReference>
<dbReference type="EMBL" id="X52686">
    <property type="protein sequence ID" value="CAA36909.1"/>
    <property type="molecule type" value="Genomic_DNA"/>
</dbReference>
<dbReference type="PIR" id="JT0209">
    <property type="entry name" value="ISBP24"/>
</dbReference>
<dbReference type="RefSeq" id="NP_049618.1">
    <property type="nucleotide sequence ID" value="NC_000866.4"/>
</dbReference>
<dbReference type="PDB" id="5NP6">
    <property type="method" value="EM"/>
    <property type="resolution" value="3.60 A"/>
    <property type="chains" value="C=1-46"/>
</dbReference>
<dbReference type="PDBsum" id="5NP6"/>
<dbReference type="SMR" id="P23992"/>
<dbReference type="GeneID" id="1258779"/>
<dbReference type="KEGG" id="vg:1258779"/>
<dbReference type="OrthoDB" id="20803at10239"/>
<dbReference type="Proteomes" id="UP000009087">
    <property type="component" value="Segment"/>
</dbReference>
<dbReference type="GO" id="GO:0009330">
    <property type="term" value="C:DNA topoisomerase type II (double strand cut, ATP-hydrolyzing) complex"/>
    <property type="evidence" value="ECO:0000315"/>
    <property type="project" value="CACAO"/>
</dbReference>
<dbReference type="GO" id="GO:0032991">
    <property type="term" value="C:protein-containing complex"/>
    <property type="evidence" value="ECO:0000314"/>
    <property type="project" value="UniProtKB"/>
</dbReference>
<dbReference type="GO" id="GO:0005524">
    <property type="term" value="F:ATP binding"/>
    <property type="evidence" value="ECO:0007669"/>
    <property type="project" value="UniProtKB-KW"/>
</dbReference>
<dbReference type="GO" id="GO:0003677">
    <property type="term" value="F:DNA binding"/>
    <property type="evidence" value="ECO:0007669"/>
    <property type="project" value="UniProtKB-KW"/>
</dbReference>
<dbReference type="GO" id="GO:0003918">
    <property type="term" value="F:DNA topoisomerase type II (double strand cut, ATP-hydrolyzing) activity"/>
    <property type="evidence" value="ECO:0007669"/>
    <property type="project" value="UniProtKB-EC"/>
</dbReference>
<dbReference type="GO" id="GO:0006265">
    <property type="term" value="P:DNA topological change"/>
    <property type="evidence" value="ECO:0007669"/>
    <property type="project" value="InterPro"/>
</dbReference>
<dbReference type="GO" id="GO:0000819">
    <property type="term" value="P:sister chromatid segregation"/>
    <property type="evidence" value="ECO:0007669"/>
    <property type="project" value="TreeGrafter"/>
</dbReference>
<dbReference type="Gene3D" id="3.40.50.670">
    <property type="match status" value="1"/>
</dbReference>
<dbReference type="InterPro" id="IPR050634">
    <property type="entry name" value="DNA_Topoisomerase_II"/>
</dbReference>
<dbReference type="InterPro" id="IPR013760">
    <property type="entry name" value="Topo_IIA-like_dom_sf"/>
</dbReference>
<dbReference type="InterPro" id="IPR013759">
    <property type="entry name" value="Topo_IIA_B_C"/>
</dbReference>
<dbReference type="InterPro" id="IPR031660">
    <property type="entry name" value="TOPRIM_C"/>
</dbReference>
<dbReference type="PANTHER" id="PTHR10169:SF38">
    <property type="entry name" value="DNA TOPOISOMERASE 2"/>
    <property type="match status" value="1"/>
</dbReference>
<dbReference type="PANTHER" id="PTHR10169">
    <property type="entry name" value="DNA TOPOISOMERASE/GYRASE"/>
    <property type="match status" value="1"/>
</dbReference>
<dbReference type="Pfam" id="PF16898">
    <property type="entry name" value="TOPRIM_C"/>
    <property type="match status" value="1"/>
</dbReference>
<dbReference type="PRINTS" id="PR00418">
    <property type="entry name" value="TPI2FAMILY"/>
</dbReference>
<dbReference type="SUPFAM" id="SSF56719">
    <property type="entry name" value="Type II DNA topoisomerase"/>
    <property type="match status" value="1"/>
</dbReference>
<accession>P23992</accession>
<evidence type="ECO:0000269" key="1">
    <source>
    </source>
</evidence>
<evidence type="ECO:0000269" key="2">
    <source>
    </source>
</evidence>
<evidence type="ECO:0000269" key="3">
    <source>
    </source>
</evidence>
<evidence type="ECO:0000269" key="4">
    <source>
    </source>
</evidence>
<evidence type="ECO:0000269" key="5">
    <source>
    </source>
</evidence>
<evidence type="ECO:0000269" key="6">
    <source>
    </source>
</evidence>
<evidence type="ECO:0007744" key="7">
    <source>
        <dbReference type="PDB" id="5NP6"/>
    </source>
</evidence>
<organismHost>
    <name type="scientific">Escherichia coli</name>
    <dbReference type="NCBI Taxonomy" id="562"/>
</organismHost>
<feature type="chain" id="PRO_0000145393" description="DNA topoisomerase small subunit">
    <location>
        <begin position="1"/>
        <end position="160"/>
    </location>
</feature>
<name>TOPS_BPT4</name>